<keyword id="KW-1185">Reference proteome</keyword>
<keyword id="KW-0949">S-adenosyl-L-methionine</keyword>
<keyword id="KW-0808">Transferase</keyword>
<reference key="1">
    <citation type="submission" date="2008-07" db="EMBL/GenBank/DDBJ databases">
        <title>Complete sequence of Geobacter bemidjiensis BEM.</title>
        <authorList>
            <consortium name="US DOE Joint Genome Institute"/>
            <person name="Lucas S."/>
            <person name="Copeland A."/>
            <person name="Lapidus A."/>
            <person name="Glavina del Rio T."/>
            <person name="Dalin E."/>
            <person name="Tice H."/>
            <person name="Bruce D."/>
            <person name="Goodwin L."/>
            <person name="Pitluck S."/>
            <person name="Kiss H."/>
            <person name="Brettin T."/>
            <person name="Detter J.C."/>
            <person name="Han C."/>
            <person name="Kuske C.R."/>
            <person name="Schmutz J."/>
            <person name="Larimer F."/>
            <person name="Land M."/>
            <person name="Hauser L."/>
            <person name="Kyrpides N."/>
            <person name="Lykidis A."/>
            <person name="Lovley D."/>
            <person name="Richardson P."/>
        </authorList>
    </citation>
    <scope>NUCLEOTIDE SEQUENCE [LARGE SCALE GENOMIC DNA]</scope>
    <source>
        <strain>ATCC BAA-1014 / DSM 16622 / JCM 12645 / Bem</strain>
    </source>
</reference>
<protein>
    <recommendedName>
        <fullName evidence="1">Carboxy-S-adenosyl-L-methionine synthase</fullName>
        <shortName evidence="1">Cx-SAM synthase</shortName>
        <ecNumber evidence="1">2.1.3.-</ecNumber>
    </recommendedName>
</protein>
<accession>B5EIQ7</accession>
<comment type="function">
    <text evidence="1">Catalyzes the conversion of S-adenosyl-L-methionine (SAM) to carboxy-S-adenosyl-L-methionine (Cx-SAM).</text>
</comment>
<comment type="catalytic activity">
    <reaction evidence="1">
        <text>prephenate + S-adenosyl-L-methionine = carboxy-S-adenosyl-L-methionine + 3-phenylpyruvate + H2O</text>
        <dbReference type="Rhea" id="RHEA:51692"/>
        <dbReference type="ChEBI" id="CHEBI:15377"/>
        <dbReference type="ChEBI" id="CHEBI:18005"/>
        <dbReference type="ChEBI" id="CHEBI:29934"/>
        <dbReference type="ChEBI" id="CHEBI:59789"/>
        <dbReference type="ChEBI" id="CHEBI:134278"/>
    </reaction>
</comment>
<comment type="subunit">
    <text evidence="1">Homodimer.</text>
</comment>
<comment type="similarity">
    <text evidence="1">Belongs to the class I-like SAM-binding methyltransferase superfamily. Cx-SAM synthase family.</text>
</comment>
<sequence length="244" mass="27212">MTRKTDDIFAAPLQEMIDFKFDERVVAVFPDMIQRSVPGYGMIISNIGILAAKYAQAGSHCYDLGCSLGAATLSMRQRISQPNCDIIAVDNSPAMIERGRELLARDSQPTVPVALICANIQDVVIENASVVVLNFTLQFIPPEQRLALIKRIHAGLRPGGILILSEKIAFSEPARQHFHVEMHHDFKRANGYSDMEISQKRSALENVMIPETVACHQERLLQAGFSSSELWFQCFNFASMVAFK</sequence>
<proteinExistence type="inferred from homology"/>
<organism>
    <name type="scientific">Citrifermentans bemidjiense (strain ATCC BAA-1014 / DSM 16622 / JCM 12645 / Bem)</name>
    <name type="common">Geobacter bemidjiensis</name>
    <dbReference type="NCBI Taxonomy" id="404380"/>
    <lineage>
        <taxon>Bacteria</taxon>
        <taxon>Pseudomonadati</taxon>
        <taxon>Thermodesulfobacteriota</taxon>
        <taxon>Desulfuromonadia</taxon>
        <taxon>Geobacterales</taxon>
        <taxon>Geobacteraceae</taxon>
        <taxon>Citrifermentans</taxon>
    </lineage>
</organism>
<name>CMOA_CITBB</name>
<feature type="chain" id="PRO_0000381957" description="Carboxy-S-adenosyl-L-methionine synthase">
    <location>
        <begin position="1"/>
        <end position="244"/>
    </location>
</feature>
<feature type="binding site" evidence="1">
    <location>
        <position position="40"/>
    </location>
    <ligand>
        <name>S-adenosyl-L-methionine</name>
        <dbReference type="ChEBI" id="CHEBI:59789"/>
    </ligand>
</feature>
<feature type="binding site" evidence="1">
    <location>
        <begin position="65"/>
        <end position="67"/>
    </location>
    <ligand>
        <name>S-adenosyl-L-methionine</name>
        <dbReference type="ChEBI" id="CHEBI:59789"/>
    </ligand>
</feature>
<feature type="binding site" evidence="1">
    <location>
        <begin position="90"/>
        <end position="91"/>
    </location>
    <ligand>
        <name>S-adenosyl-L-methionine</name>
        <dbReference type="ChEBI" id="CHEBI:59789"/>
    </ligand>
</feature>
<feature type="binding site" evidence="1">
    <location>
        <position position="134"/>
    </location>
    <ligand>
        <name>S-adenosyl-L-methionine</name>
        <dbReference type="ChEBI" id="CHEBI:59789"/>
    </ligand>
</feature>
<feature type="binding site" evidence="1">
    <location>
        <position position="201"/>
    </location>
    <ligand>
        <name>S-adenosyl-L-methionine</name>
        <dbReference type="ChEBI" id="CHEBI:59789"/>
    </ligand>
</feature>
<dbReference type="EC" id="2.1.3.-" evidence="1"/>
<dbReference type="EMBL" id="CP001124">
    <property type="protein sequence ID" value="ACH38422.2"/>
    <property type="molecule type" value="Genomic_DNA"/>
</dbReference>
<dbReference type="RefSeq" id="WP_041263084.1">
    <property type="nucleotide sequence ID" value="NC_011146.1"/>
</dbReference>
<dbReference type="SMR" id="B5EIQ7"/>
<dbReference type="STRING" id="404380.Gbem_1403"/>
<dbReference type="KEGG" id="gbm:Gbem_1403"/>
<dbReference type="eggNOG" id="COG4106">
    <property type="taxonomic scope" value="Bacteria"/>
</dbReference>
<dbReference type="HOGENOM" id="CLU_078475_0_0_7"/>
<dbReference type="OrthoDB" id="5386938at2"/>
<dbReference type="Proteomes" id="UP000008825">
    <property type="component" value="Chromosome"/>
</dbReference>
<dbReference type="GO" id="GO:0016743">
    <property type="term" value="F:carboxyl- or carbamoyltransferase activity"/>
    <property type="evidence" value="ECO:0007669"/>
    <property type="project" value="UniProtKB-UniRule"/>
</dbReference>
<dbReference type="GO" id="GO:1904047">
    <property type="term" value="F:S-adenosyl-L-methionine binding"/>
    <property type="evidence" value="ECO:0007669"/>
    <property type="project" value="UniProtKB-UniRule"/>
</dbReference>
<dbReference type="GO" id="GO:0002098">
    <property type="term" value="P:tRNA wobble uridine modification"/>
    <property type="evidence" value="ECO:0007669"/>
    <property type="project" value="InterPro"/>
</dbReference>
<dbReference type="CDD" id="cd02440">
    <property type="entry name" value="AdoMet_MTases"/>
    <property type="match status" value="1"/>
</dbReference>
<dbReference type="Gene3D" id="3.40.50.150">
    <property type="entry name" value="Vaccinia Virus protein VP39"/>
    <property type="match status" value="1"/>
</dbReference>
<dbReference type="HAMAP" id="MF_01589">
    <property type="entry name" value="Cx_SAM_synthase"/>
    <property type="match status" value="1"/>
</dbReference>
<dbReference type="InterPro" id="IPR005271">
    <property type="entry name" value="CmoA"/>
</dbReference>
<dbReference type="InterPro" id="IPR041698">
    <property type="entry name" value="Methyltransf_25"/>
</dbReference>
<dbReference type="InterPro" id="IPR029063">
    <property type="entry name" value="SAM-dependent_MTases_sf"/>
</dbReference>
<dbReference type="NCBIfam" id="TIGR00740">
    <property type="entry name" value="carboxy-S-adenosyl-L-methionine synthase CmoA"/>
    <property type="match status" value="1"/>
</dbReference>
<dbReference type="NCBIfam" id="NF011995">
    <property type="entry name" value="PRK15451.1"/>
    <property type="match status" value="1"/>
</dbReference>
<dbReference type="PANTHER" id="PTHR43861:SF2">
    <property type="entry name" value="CARBOXY-S-ADENOSYL-L-METHIONINE SYNTHASE"/>
    <property type="match status" value="1"/>
</dbReference>
<dbReference type="PANTHER" id="PTHR43861">
    <property type="entry name" value="TRANS-ACONITATE 2-METHYLTRANSFERASE-RELATED"/>
    <property type="match status" value="1"/>
</dbReference>
<dbReference type="Pfam" id="PF13649">
    <property type="entry name" value="Methyltransf_25"/>
    <property type="match status" value="1"/>
</dbReference>
<dbReference type="PIRSF" id="PIRSF006325">
    <property type="entry name" value="MeTrfase_bac"/>
    <property type="match status" value="1"/>
</dbReference>
<dbReference type="SUPFAM" id="SSF53335">
    <property type="entry name" value="S-adenosyl-L-methionine-dependent methyltransferases"/>
    <property type="match status" value="1"/>
</dbReference>
<gene>
    <name evidence="1" type="primary">cmoA</name>
    <name type="ordered locus">Gbem_1403</name>
</gene>
<evidence type="ECO:0000255" key="1">
    <source>
        <dbReference type="HAMAP-Rule" id="MF_01589"/>
    </source>
</evidence>